<feature type="chain" id="PRO_1000195675" description="Large ribosomal subunit protein uL11">
    <location>
        <begin position="1"/>
        <end position="142"/>
    </location>
</feature>
<comment type="function">
    <text evidence="1">Forms part of the ribosomal stalk which helps the ribosome interact with GTP-bound translation factors.</text>
</comment>
<comment type="subunit">
    <text evidence="1">Part of the ribosomal stalk of the 50S ribosomal subunit. Interacts with L10 and the large rRNA to form the base of the stalk. L10 forms an elongated spine to which L12 dimers bind in a sequential fashion forming a multimeric L10(L12)X complex.</text>
</comment>
<comment type="PTM">
    <text evidence="1">One or more lysine residues are methylated.</text>
</comment>
<comment type="similarity">
    <text evidence="1">Belongs to the universal ribosomal protein uL11 family.</text>
</comment>
<gene>
    <name evidence="1" type="primary">rplK</name>
    <name type="ordered locus">MLBr01905</name>
</gene>
<name>RL11_MYCLB</name>
<sequence>MATKKKVAGLIKLQIQAGQANPAPPVGPALGQHGVNIMEFCKAYNAATENQRGQVIPVEITVYEDRSFTFALKTPPAAKLLLDAAGVGKGVAEPHKTKVVKVSWDQVREIAETKKADLNANDIDAAAKIIAGTARSMGITVE</sequence>
<proteinExistence type="inferred from homology"/>
<evidence type="ECO:0000255" key="1">
    <source>
        <dbReference type="HAMAP-Rule" id="MF_00736"/>
    </source>
</evidence>
<evidence type="ECO:0000305" key="2"/>
<accession>B8ZSD6</accession>
<organism>
    <name type="scientific">Mycobacterium leprae (strain Br4923)</name>
    <dbReference type="NCBI Taxonomy" id="561304"/>
    <lineage>
        <taxon>Bacteria</taxon>
        <taxon>Bacillati</taxon>
        <taxon>Actinomycetota</taxon>
        <taxon>Actinomycetes</taxon>
        <taxon>Mycobacteriales</taxon>
        <taxon>Mycobacteriaceae</taxon>
        <taxon>Mycobacterium</taxon>
    </lineage>
</organism>
<keyword id="KW-0488">Methylation</keyword>
<keyword id="KW-0687">Ribonucleoprotein</keyword>
<keyword id="KW-0689">Ribosomal protein</keyword>
<keyword id="KW-0694">RNA-binding</keyword>
<keyword id="KW-0699">rRNA-binding</keyword>
<protein>
    <recommendedName>
        <fullName evidence="1">Large ribosomal subunit protein uL11</fullName>
    </recommendedName>
    <alternativeName>
        <fullName evidence="2">50S ribosomal protein L11</fullName>
    </alternativeName>
</protein>
<reference key="1">
    <citation type="journal article" date="2009" name="Nat. Genet.">
        <title>Comparative genomic and phylogeographic analysis of Mycobacterium leprae.</title>
        <authorList>
            <person name="Monot M."/>
            <person name="Honore N."/>
            <person name="Garnier T."/>
            <person name="Zidane N."/>
            <person name="Sherafi D."/>
            <person name="Paniz-Mondolfi A."/>
            <person name="Matsuoka M."/>
            <person name="Taylor G.M."/>
            <person name="Donoghue H.D."/>
            <person name="Bouwman A."/>
            <person name="Mays S."/>
            <person name="Watson C."/>
            <person name="Lockwood D."/>
            <person name="Khamispour A."/>
            <person name="Dowlati Y."/>
            <person name="Jianping S."/>
            <person name="Rea T.H."/>
            <person name="Vera-Cabrera L."/>
            <person name="Stefani M.M."/>
            <person name="Banu S."/>
            <person name="Macdonald M."/>
            <person name="Sapkota B.R."/>
            <person name="Spencer J.S."/>
            <person name="Thomas J."/>
            <person name="Harshman K."/>
            <person name="Singh P."/>
            <person name="Busso P."/>
            <person name="Gattiker A."/>
            <person name="Rougemont J."/>
            <person name="Brennan P.J."/>
            <person name="Cole S.T."/>
        </authorList>
    </citation>
    <scope>NUCLEOTIDE SEQUENCE [LARGE SCALE GENOMIC DNA]</scope>
    <source>
        <strain>Br4923</strain>
    </source>
</reference>
<dbReference type="EMBL" id="FM211192">
    <property type="protein sequence ID" value="CAR72001.1"/>
    <property type="molecule type" value="Genomic_DNA"/>
</dbReference>
<dbReference type="SMR" id="B8ZSD6"/>
<dbReference type="KEGG" id="mlb:MLBr01905"/>
<dbReference type="HOGENOM" id="CLU_074237_2_1_11"/>
<dbReference type="Proteomes" id="UP000006900">
    <property type="component" value="Chromosome"/>
</dbReference>
<dbReference type="GO" id="GO:0022625">
    <property type="term" value="C:cytosolic large ribosomal subunit"/>
    <property type="evidence" value="ECO:0007669"/>
    <property type="project" value="TreeGrafter"/>
</dbReference>
<dbReference type="GO" id="GO:0070180">
    <property type="term" value="F:large ribosomal subunit rRNA binding"/>
    <property type="evidence" value="ECO:0007669"/>
    <property type="project" value="UniProtKB-UniRule"/>
</dbReference>
<dbReference type="GO" id="GO:0003735">
    <property type="term" value="F:structural constituent of ribosome"/>
    <property type="evidence" value="ECO:0007669"/>
    <property type="project" value="InterPro"/>
</dbReference>
<dbReference type="GO" id="GO:0006412">
    <property type="term" value="P:translation"/>
    <property type="evidence" value="ECO:0007669"/>
    <property type="project" value="UniProtKB-UniRule"/>
</dbReference>
<dbReference type="CDD" id="cd00349">
    <property type="entry name" value="Ribosomal_L11"/>
    <property type="match status" value="1"/>
</dbReference>
<dbReference type="FunFam" id="1.10.10.250:FF:000001">
    <property type="entry name" value="50S ribosomal protein L11"/>
    <property type="match status" value="1"/>
</dbReference>
<dbReference type="FunFam" id="3.30.1550.10:FF:000001">
    <property type="entry name" value="50S ribosomal protein L11"/>
    <property type="match status" value="1"/>
</dbReference>
<dbReference type="Gene3D" id="1.10.10.250">
    <property type="entry name" value="Ribosomal protein L11, C-terminal domain"/>
    <property type="match status" value="1"/>
</dbReference>
<dbReference type="Gene3D" id="3.30.1550.10">
    <property type="entry name" value="Ribosomal protein L11/L12, N-terminal domain"/>
    <property type="match status" value="1"/>
</dbReference>
<dbReference type="HAMAP" id="MF_00736">
    <property type="entry name" value="Ribosomal_uL11"/>
    <property type="match status" value="1"/>
</dbReference>
<dbReference type="InterPro" id="IPR000911">
    <property type="entry name" value="Ribosomal_uL11"/>
</dbReference>
<dbReference type="InterPro" id="IPR006519">
    <property type="entry name" value="Ribosomal_uL11_bac-typ"/>
</dbReference>
<dbReference type="InterPro" id="IPR020783">
    <property type="entry name" value="Ribosomal_uL11_C"/>
</dbReference>
<dbReference type="InterPro" id="IPR036769">
    <property type="entry name" value="Ribosomal_uL11_C_sf"/>
</dbReference>
<dbReference type="InterPro" id="IPR020785">
    <property type="entry name" value="Ribosomal_uL11_CS"/>
</dbReference>
<dbReference type="InterPro" id="IPR020784">
    <property type="entry name" value="Ribosomal_uL11_N"/>
</dbReference>
<dbReference type="InterPro" id="IPR036796">
    <property type="entry name" value="Ribosomal_uL11_N_sf"/>
</dbReference>
<dbReference type="NCBIfam" id="TIGR01632">
    <property type="entry name" value="L11_bact"/>
    <property type="match status" value="1"/>
</dbReference>
<dbReference type="PANTHER" id="PTHR11661">
    <property type="entry name" value="60S RIBOSOMAL PROTEIN L12"/>
    <property type="match status" value="1"/>
</dbReference>
<dbReference type="PANTHER" id="PTHR11661:SF1">
    <property type="entry name" value="LARGE RIBOSOMAL SUBUNIT PROTEIN UL11M"/>
    <property type="match status" value="1"/>
</dbReference>
<dbReference type="Pfam" id="PF00298">
    <property type="entry name" value="Ribosomal_L11"/>
    <property type="match status" value="1"/>
</dbReference>
<dbReference type="Pfam" id="PF03946">
    <property type="entry name" value="Ribosomal_L11_N"/>
    <property type="match status" value="1"/>
</dbReference>
<dbReference type="SMART" id="SM00649">
    <property type="entry name" value="RL11"/>
    <property type="match status" value="1"/>
</dbReference>
<dbReference type="SUPFAM" id="SSF54747">
    <property type="entry name" value="Ribosomal L11/L12e N-terminal domain"/>
    <property type="match status" value="1"/>
</dbReference>
<dbReference type="SUPFAM" id="SSF46906">
    <property type="entry name" value="Ribosomal protein L11, C-terminal domain"/>
    <property type="match status" value="1"/>
</dbReference>
<dbReference type="PROSITE" id="PS00359">
    <property type="entry name" value="RIBOSOMAL_L11"/>
    <property type="match status" value="1"/>
</dbReference>